<dbReference type="EMBL" id="CP000407">
    <property type="protein sequence ID" value="ABP90137.1"/>
    <property type="molecule type" value="Genomic_DNA"/>
</dbReference>
<dbReference type="SMR" id="A4VVJ8"/>
<dbReference type="STRING" id="391295.SSU05_1171"/>
<dbReference type="KEGG" id="ssu:SSU05_1171"/>
<dbReference type="eggNOG" id="COG0355">
    <property type="taxonomic scope" value="Bacteria"/>
</dbReference>
<dbReference type="HOGENOM" id="CLU_084338_1_0_9"/>
<dbReference type="GO" id="GO:0005886">
    <property type="term" value="C:plasma membrane"/>
    <property type="evidence" value="ECO:0007669"/>
    <property type="project" value="UniProtKB-SubCell"/>
</dbReference>
<dbReference type="GO" id="GO:0045259">
    <property type="term" value="C:proton-transporting ATP synthase complex"/>
    <property type="evidence" value="ECO:0007669"/>
    <property type="project" value="UniProtKB-KW"/>
</dbReference>
<dbReference type="GO" id="GO:0005524">
    <property type="term" value="F:ATP binding"/>
    <property type="evidence" value="ECO:0007669"/>
    <property type="project" value="UniProtKB-UniRule"/>
</dbReference>
<dbReference type="GO" id="GO:0046933">
    <property type="term" value="F:proton-transporting ATP synthase activity, rotational mechanism"/>
    <property type="evidence" value="ECO:0007669"/>
    <property type="project" value="UniProtKB-UniRule"/>
</dbReference>
<dbReference type="CDD" id="cd12152">
    <property type="entry name" value="F1-ATPase_delta"/>
    <property type="match status" value="1"/>
</dbReference>
<dbReference type="Gene3D" id="1.20.5.440">
    <property type="entry name" value="ATP synthase delta/epsilon subunit, C-terminal domain"/>
    <property type="match status" value="1"/>
</dbReference>
<dbReference type="Gene3D" id="2.60.15.10">
    <property type="entry name" value="F0F1 ATP synthase delta/epsilon subunit, N-terminal"/>
    <property type="match status" value="1"/>
</dbReference>
<dbReference type="HAMAP" id="MF_00530">
    <property type="entry name" value="ATP_synth_epsil_bac"/>
    <property type="match status" value="1"/>
</dbReference>
<dbReference type="InterPro" id="IPR001469">
    <property type="entry name" value="ATP_synth_F1_dsu/esu"/>
</dbReference>
<dbReference type="InterPro" id="IPR020546">
    <property type="entry name" value="ATP_synth_F1_dsu/esu_N"/>
</dbReference>
<dbReference type="InterPro" id="IPR020547">
    <property type="entry name" value="ATP_synth_F1_esu_C"/>
</dbReference>
<dbReference type="InterPro" id="IPR036771">
    <property type="entry name" value="ATPsynth_dsu/esu_N"/>
</dbReference>
<dbReference type="NCBIfam" id="TIGR01216">
    <property type="entry name" value="ATP_synt_epsi"/>
    <property type="match status" value="1"/>
</dbReference>
<dbReference type="NCBIfam" id="NF001846">
    <property type="entry name" value="PRK00571.1-3"/>
    <property type="match status" value="1"/>
</dbReference>
<dbReference type="PANTHER" id="PTHR13822">
    <property type="entry name" value="ATP SYNTHASE DELTA/EPSILON CHAIN"/>
    <property type="match status" value="1"/>
</dbReference>
<dbReference type="PANTHER" id="PTHR13822:SF10">
    <property type="entry name" value="ATP SYNTHASE EPSILON CHAIN, CHLOROPLASTIC"/>
    <property type="match status" value="1"/>
</dbReference>
<dbReference type="Pfam" id="PF00401">
    <property type="entry name" value="ATP-synt_DE"/>
    <property type="match status" value="1"/>
</dbReference>
<dbReference type="Pfam" id="PF02823">
    <property type="entry name" value="ATP-synt_DE_N"/>
    <property type="match status" value="1"/>
</dbReference>
<dbReference type="SUPFAM" id="SSF51344">
    <property type="entry name" value="Epsilon subunit of F1F0-ATP synthase N-terminal domain"/>
    <property type="match status" value="1"/>
</dbReference>
<proteinExistence type="inferred from homology"/>
<accession>A4VVJ8</accession>
<reference key="1">
    <citation type="journal article" date="2007" name="PLoS ONE">
        <title>A glimpse of streptococcal toxic shock syndrome from comparative genomics of S. suis 2 Chinese isolates.</title>
        <authorList>
            <person name="Chen C."/>
            <person name="Tang J."/>
            <person name="Dong W."/>
            <person name="Wang C."/>
            <person name="Feng Y."/>
            <person name="Wang J."/>
            <person name="Zheng F."/>
            <person name="Pan X."/>
            <person name="Liu D."/>
            <person name="Li M."/>
            <person name="Song Y."/>
            <person name="Zhu X."/>
            <person name="Sun H."/>
            <person name="Feng T."/>
            <person name="Guo Z."/>
            <person name="Ju A."/>
            <person name="Ge J."/>
            <person name="Dong Y."/>
            <person name="Sun W."/>
            <person name="Jiang Y."/>
            <person name="Wang J."/>
            <person name="Yan J."/>
            <person name="Yang H."/>
            <person name="Wang X."/>
            <person name="Gao G.F."/>
            <person name="Yang R."/>
            <person name="Wang J."/>
            <person name="Yu J."/>
        </authorList>
    </citation>
    <scope>NUCLEOTIDE SEQUENCE [LARGE SCALE GENOMIC DNA]</scope>
    <source>
        <strain>05ZYH33</strain>
    </source>
</reference>
<comment type="function">
    <text evidence="1">Produces ATP from ADP in the presence of a proton gradient across the membrane.</text>
</comment>
<comment type="subunit">
    <text evidence="1">F-type ATPases have 2 components, CF(1) - the catalytic core - and CF(0) - the membrane proton channel. CF(1) has five subunits: alpha(3), beta(3), gamma(1), delta(1), epsilon(1). CF(0) has three main subunits: a, b and c.</text>
</comment>
<comment type="subcellular location">
    <subcellularLocation>
        <location evidence="1">Cell membrane</location>
        <topology evidence="1">Peripheral membrane protein</topology>
    </subcellularLocation>
</comment>
<comment type="similarity">
    <text evidence="1">Belongs to the ATPase epsilon chain family.</text>
</comment>
<feature type="chain" id="PRO_1000056543" description="ATP synthase epsilon chain">
    <location>
        <begin position="1"/>
        <end position="138"/>
    </location>
</feature>
<keyword id="KW-0066">ATP synthesis</keyword>
<keyword id="KW-1003">Cell membrane</keyword>
<keyword id="KW-0139">CF(1)</keyword>
<keyword id="KW-0375">Hydrogen ion transport</keyword>
<keyword id="KW-0406">Ion transport</keyword>
<keyword id="KW-0472">Membrane</keyword>
<keyword id="KW-0813">Transport</keyword>
<name>ATPE_STRSY</name>
<gene>
    <name evidence="1" type="primary">atpC</name>
    <name type="ordered locus">SSU05_1171</name>
</gene>
<protein>
    <recommendedName>
        <fullName evidence="1">ATP synthase epsilon chain</fullName>
    </recommendedName>
    <alternativeName>
        <fullName evidence="1">ATP synthase F1 sector epsilon subunit</fullName>
    </alternativeName>
    <alternativeName>
        <fullName evidence="1">F-ATPase epsilon subunit</fullName>
    </alternativeName>
</protein>
<sequence length="138" mass="15589">MGQMTVQIVTPDGIKYDHHAAFVLVKTVDGEMGVYSGHEELIAVLEIGEMKVRRVDDENHVDWIAVNGGIIEVNKDIITVISDSAERERDIDISRAERAKLRAERELEEAQTARNIDMEMRATVALQRAINRIRVGKH</sequence>
<organism>
    <name type="scientific">Streptococcus suis (strain 05ZYH33)</name>
    <dbReference type="NCBI Taxonomy" id="391295"/>
    <lineage>
        <taxon>Bacteria</taxon>
        <taxon>Bacillati</taxon>
        <taxon>Bacillota</taxon>
        <taxon>Bacilli</taxon>
        <taxon>Lactobacillales</taxon>
        <taxon>Streptococcaceae</taxon>
        <taxon>Streptococcus</taxon>
    </lineage>
</organism>
<evidence type="ECO:0000255" key="1">
    <source>
        <dbReference type="HAMAP-Rule" id="MF_00530"/>
    </source>
</evidence>